<feature type="chain" id="PRO_0000212846" description="CCR4-NOT transcription complex subunit 8">
    <location>
        <begin position="1"/>
        <end position="292"/>
    </location>
</feature>
<feature type="binding site" evidence="1">
    <location>
        <position position="40"/>
    </location>
    <ligand>
        <name>a divalent metal cation</name>
        <dbReference type="ChEBI" id="CHEBI:60240"/>
        <label>1</label>
        <note>catalytic</note>
    </ligand>
</feature>
<feature type="binding site" evidence="1">
    <location>
        <position position="40"/>
    </location>
    <ligand>
        <name>a divalent metal cation</name>
        <dbReference type="ChEBI" id="CHEBI:60240"/>
        <label>2</label>
        <note>catalytic</note>
    </ligand>
</feature>
<feature type="binding site" evidence="1">
    <location>
        <position position="42"/>
    </location>
    <ligand>
        <name>a divalent metal cation</name>
        <dbReference type="ChEBI" id="CHEBI:60240"/>
        <label>2</label>
        <note>catalytic</note>
    </ligand>
</feature>
<feature type="binding site" evidence="1">
    <location>
        <position position="161"/>
    </location>
    <ligand>
        <name>a divalent metal cation</name>
        <dbReference type="ChEBI" id="CHEBI:60240"/>
        <label>1</label>
        <note>catalytic</note>
    </ligand>
</feature>
<feature type="binding site" evidence="1">
    <location>
        <position position="230"/>
    </location>
    <ligand>
        <name>a divalent metal cation</name>
        <dbReference type="ChEBI" id="CHEBI:60240"/>
        <label>2</label>
        <note>catalytic</note>
    </ligand>
</feature>
<feature type="splice variant" id="VSP_055527" description="In isoform 2." evidence="12">
    <location>
        <begin position="1"/>
        <end position="106"/>
    </location>
</feature>
<feature type="splice variant" id="VSP_055528" description="In isoform 3." evidence="12">
    <location>
        <begin position="105"/>
        <end position="158"/>
    </location>
</feature>
<feature type="sequence variant" id="VAR_048751" description="In dbSNP:rs1139980." evidence="3">
    <original>L</original>
    <variation>P</variation>
    <location>
        <position position="32"/>
    </location>
</feature>
<feature type="mutagenesis site" description="Impairs deadenylation and decay of mRNAi-targeted mRNA; when associated with A-42." evidence="10">
    <original>D</original>
    <variation>A</variation>
    <location>
        <position position="40"/>
    </location>
</feature>
<feature type="mutagenesis site" description="Impairs deadenylation and decay of mRNAi-targeted mRNA; when associated with A-40." evidence="10">
    <original>E</original>
    <variation>A</variation>
    <location>
        <position position="42"/>
    </location>
</feature>
<feature type="sequence conflict" description="In Ref. 3; AAP97157." evidence="13" ref="3">
    <original>FKFNLTE</original>
    <variation>CKLYLTV</variation>
    <location>
        <begin position="99"/>
        <end position="105"/>
    </location>
</feature>
<feature type="sequence conflict" description="In Ref. 5; BAB15119." evidence="13" ref="5">
    <original>K</original>
    <variation>R</variation>
    <location>
        <position position="152"/>
    </location>
</feature>
<feature type="sequence conflict" description="In Ref. 1; AAD02685." evidence="13" ref="1">
    <original>F</original>
    <variation>L</variation>
    <location>
        <position position="182"/>
    </location>
</feature>
<feature type="sequence conflict" description="In Ref. 1; AAD02685." evidence="13" ref="1">
    <original>F</original>
    <variation>S</variation>
    <location>
        <position position="189"/>
    </location>
</feature>
<accession>Q9UFF9</accession>
<accession>B0AZS3</accession>
<accession>B2RAR8</accession>
<accession>B7Z8R1</accession>
<accession>D3DQI8</accession>
<accession>O95709</accession>
<accession>Q7Z521</accession>
<accession>Q9H6Y1</accession>
<name>CNOT8_HUMAN</name>
<protein>
    <recommendedName>
        <fullName>CCR4-NOT transcription complex subunit 8</fullName>
        <ecNumber>3.1.13.4</ecNumber>
    </recommendedName>
    <alternativeName>
        <fullName>CAF1-like protein</fullName>
        <shortName>CALIFp</shortName>
    </alternativeName>
    <alternativeName>
        <fullName>CAF2</fullName>
    </alternativeName>
    <alternativeName>
        <fullName>CCR4-associated factor 8</fullName>
    </alternativeName>
    <alternativeName>
        <fullName>Caf1b</fullName>
    </alternativeName>
</protein>
<keyword id="KW-0025">Alternative splicing</keyword>
<keyword id="KW-0963">Cytoplasm</keyword>
<keyword id="KW-0269">Exonuclease</keyword>
<keyword id="KW-0378">Hydrolase</keyword>
<keyword id="KW-0479">Metal-binding</keyword>
<keyword id="KW-0540">Nuclease</keyword>
<keyword id="KW-0539">Nucleus</keyword>
<keyword id="KW-1267">Proteomics identification</keyword>
<keyword id="KW-1185">Reference proteome</keyword>
<keyword id="KW-0678">Repressor</keyword>
<keyword id="KW-0694">RNA-binding</keyword>
<keyword id="KW-0943">RNA-mediated gene silencing</keyword>
<keyword id="KW-0804">Transcription</keyword>
<keyword id="KW-0805">Transcription regulation</keyword>
<keyword id="KW-0810">Translation regulation</keyword>
<comment type="function">
    <text evidence="6 9 10 11">Has 3'-5' poly(A) exoribonuclease activity for synthetic poly(A) RNA substrate. Its function seems to be partially redundant with that of CNOT7. Catalytic component of the CCR4-NOT complex which is linked to various cellular processes including bulk mRNA degradation, miRNA-mediated repression, translational repression during translational initiation and general transcription regulation. During miRNA-mediated repression the complex also seems to act as translational repressor during translational initiation. Additional complex functions may be a consequence of its influence on mRNA expression. Associates with members of the BTG family such as TOB1 and BTG2 and is required for their anti-proliferative activity.</text>
</comment>
<comment type="catalytic activity">
    <reaction evidence="7">
        <text>Exonucleolytic cleavage of poly(A) to 5'-AMP.</text>
        <dbReference type="EC" id="3.1.13.4"/>
    </reaction>
</comment>
<comment type="subunit">
    <text evidence="2 4 5 6 8 11">Component of the CCR4-NOT complex; distinct complexes seem to exist that differ in the participation of probably mutually exclusive catalytic subunits; the complex contains two deadenylase subunits, CNOT6 or CNOT6L, and CNOT7 or CNOT8. In the complex interacts directly with CNOT1. Interacts with BTG1, BTG2 and TOB1. Interacts with BTG4 (By similarity).</text>
</comment>
<comment type="interaction">
    <interactant intactId="EBI-742299">
        <id>Q9UFF9</id>
    </interactant>
    <interactant intactId="EBI-742279">
        <id>P62324</id>
        <label>BTG1</label>
    </interactant>
    <organismsDiffer>false</organismsDiffer>
    <experiments>6</experiments>
</comment>
<comment type="interaction">
    <interactant intactId="EBI-742299">
        <id>Q9UFF9</id>
    </interactant>
    <interactant intactId="EBI-10250021">
        <id>Q6IBC8</id>
        <label>BTG1</label>
    </interactant>
    <organismsDiffer>false</organismsDiffer>
    <experiments>3</experiments>
</comment>
<comment type="interaction">
    <interactant intactId="EBI-742299">
        <id>Q9UFF9</id>
    </interactant>
    <interactant intactId="EBI-1047576">
        <id>P78543</id>
        <label>BTG2</label>
    </interactant>
    <organismsDiffer>false</organismsDiffer>
    <experiments>5</experiments>
</comment>
<comment type="interaction">
    <interactant intactId="EBI-742299">
        <id>Q9UFF9</id>
    </interactant>
    <interactant intactId="EBI-1222758">
        <id>A5YKK6</id>
        <label>CNOT1</label>
    </interactant>
    <organismsDiffer>false</organismsDiffer>
    <experiments>6</experiments>
</comment>
<comment type="interaction">
    <interactant intactId="EBI-742299">
        <id>Q9UFF9</id>
    </interactant>
    <interactant intactId="EBI-743033">
        <id>Q9NZN8</id>
        <label>CNOT2</label>
    </interactant>
    <organismsDiffer>false</organismsDiffer>
    <experiments>3</experiments>
</comment>
<comment type="interaction">
    <interactant intactId="EBI-742299">
        <id>Q9UFF9</id>
    </interactant>
    <interactant intactId="EBI-743073">
        <id>O75175</id>
        <label>CNOT3</label>
    </interactant>
    <organismsDiffer>false</organismsDiffer>
    <experiments>5</experiments>
</comment>
<comment type="interaction">
    <interactant intactId="EBI-742299">
        <id>Q9UFF9</id>
    </interactant>
    <interactant intactId="EBI-2104530">
        <id>Q9ULM6</id>
        <label>CNOT6</label>
    </interactant>
    <organismsDiffer>false</organismsDiffer>
    <experiments>2</experiments>
</comment>
<comment type="interaction">
    <interactant intactId="EBI-742299">
        <id>Q9UFF9</id>
    </interactant>
    <interactant intactId="EBI-1046635">
        <id>Q96LI5</id>
        <label>CNOT6L</label>
    </interactant>
    <organismsDiffer>false</organismsDiffer>
    <experiments>6</experiments>
</comment>
<comment type="interaction">
    <interactant intactId="EBI-742299">
        <id>Q9UFF9</id>
    </interactant>
    <interactant intactId="EBI-2562092">
        <id>Q86TB9</id>
        <label>PATL1</label>
    </interactant>
    <organismsDiffer>false</organismsDiffer>
    <experiments>3</experiments>
</comment>
<comment type="interaction">
    <interactant intactId="EBI-742299">
        <id>Q9UFF9</id>
    </interactant>
    <interactant intactId="EBI-2562000">
        <id>Q14106</id>
        <label>TOB2</label>
    </interactant>
    <organismsDiffer>false</organismsDiffer>
    <experiments>3</experiments>
</comment>
<comment type="subcellular location">
    <subcellularLocation>
        <location evidence="6">Cytoplasm</location>
    </subcellularLocation>
    <subcellularLocation>
        <location evidence="6">Nucleus</location>
    </subcellularLocation>
</comment>
<comment type="alternative products">
    <event type="alternative splicing"/>
    <isoform>
        <id>Q9UFF9-1</id>
        <name>1</name>
        <sequence type="displayed"/>
    </isoform>
    <isoform>
        <id>Q9UFF9-2</id>
        <name>2</name>
        <sequence type="described" ref="VSP_055527"/>
    </isoform>
    <isoform>
        <id>Q9UFF9-3</id>
        <name>3</name>
        <sequence type="described" ref="VSP_055528"/>
    </isoform>
</comment>
<comment type="similarity">
    <text evidence="13">Belongs to the CAF1 family.</text>
</comment>
<organism>
    <name type="scientific">Homo sapiens</name>
    <name type="common">Human</name>
    <dbReference type="NCBI Taxonomy" id="9606"/>
    <lineage>
        <taxon>Eukaryota</taxon>
        <taxon>Metazoa</taxon>
        <taxon>Chordata</taxon>
        <taxon>Craniata</taxon>
        <taxon>Vertebrata</taxon>
        <taxon>Euteleostomi</taxon>
        <taxon>Mammalia</taxon>
        <taxon>Eutheria</taxon>
        <taxon>Euarchontoglires</taxon>
        <taxon>Primates</taxon>
        <taxon>Haplorrhini</taxon>
        <taxon>Catarrhini</taxon>
        <taxon>Hominidae</taxon>
        <taxon>Homo</taxon>
    </lineage>
</organism>
<evidence type="ECO:0000250" key="1"/>
<evidence type="ECO:0000250" key="2">
    <source>
        <dbReference type="UniProtKB" id="Q9D8X5"/>
    </source>
</evidence>
<evidence type="ECO:0000269" key="3">
    <source>
    </source>
</evidence>
<evidence type="ECO:0000269" key="4">
    <source>
    </source>
</evidence>
<evidence type="ECO:0000269" key="5">
    <source>
    </source>
</evidence>
<evidence type="ECO:0000269" key="6">
    <source>
    </source>
</evidence>
<evidence type="ECO:0000269" key="7">
    <source>
    </source>
</evidence>
<evidence type="ECO:0000269" key="8">
    <source>
    </source>
</evidence>
<evidence type="ECO:0000269" key="9">
    <source>
    </source>
</evidence>
<evidence type="ECO:0000269" key="10">
    <source>
    </source>
</evidence>
<evidence type="ECO:0000269" key="11">
    <source>
    </source>
</evidence>
<evidence type="ECO:0000303" key="12">
    <source>
    </source>
</evidence>
<evidence type="ECO:0000305" key="13"/>
<dbReference type="EC" id="3.1.13.4"/>
<dbReference type="EMBL" id="AF053318">
    <property type="protein sequence ID" value="AAD02685.1"/>
    <property type="molecule type" value="mRNA"/>
</dbReference>
<dbReference type="EMBL" id="AF180476">
    <property type="protein sequence ID" value="AAF29830.1"/>
    <property type="molecule type" value="mRNA"/>
</dbReference>
<dbReference type="EMBL" id="AF087844">
    <property type="protein sequence ID" value="AAP97157.1"/>
    <property type="molecule type" value="mRNA"/>
</dbReference>
<dbReference type="EMBL" id="AL122045">
    <property type="protein sequence ID" value="CAB59181.1"/>
    <property type="molecule type" value="mRNA"/>
</dbReference>
<dbReference type="EMBL" id="BT006857">
    <property type="protein sequence ID" value="AAP35503.1"/>
    <property type="molecule type" value="mRNA"/>
</dbReference>
<dbReference type="EMBL" id="AK025358">
    <property type="protein sequence ID" value="BAB15119.1"/>
    <property type="molecule type" value="mRNA"/>
</dbReference>
<dbReference type="EMBL" id="AK315864">
    <property type="protein sequence ID" value="BAF98755.1"/>
    <property type="molecule type" value="mRNA"/>
</dbReference>
<dbReference type="EMBL" id="AK297381">
    <property type="protein sequence ID" value="BAH12567.1"/>
    <property type="molecule type" value="mRNA"/>
</dbReference>
<dbReference type="EMBL" id="AK303775">
    <property type="protein sequence ID" value="BAH14047.1"/>
    <property type="molecule type" value="mRNA"/>
</dbReference>
<dbReference type="EMBL" id="AK314317">
    <property type="protein sequence ID" value="BAG36965.1"/>
    <property type="molecule type" value="mRNA"/>
</dbReference>
<dbReference type="EMBL" id="AK316221">
    <property type="protein sequence ID" value="BAH14592.1"/>
    <property type="molecule type" value="mRNA"/>
</dbReference>
<dbReference type="EMBL" id="AK316269">
    <property type="protein sequence ID" value="BAH14640.1"/>
    <property type="molecule type" value="mRNA"/>
</dbReference>
<dbReference type="EMBL" id="AC112169">
    <property type="status" value="NOT_ANNOTATED_CDS"/>
    <property type="molecule type" value="Genomic_DNA"/>
</dbReference>
<dbReference type="EMBL" id="CH471062">
    <property type="protein sequence ID" value="EAW61625.1"/>
    <property type="molecule type" value="Genomic_DNA"/>
</dbReference>
<dbReference type="EMBL" id="CH471062">
    <property type="protein sequence ID" value="EAW61626.1"/>
    <property type="molecule type" value="Genomic_DNA"/>
</dbReference>
<dbReference type="EMBL" id="CH471062">
    <property type="protein sequence ID" value="EAW61627.1"/>
    <property type="molecule type" value="Genomic_DNA"/>
</dbReference>
<dbReference type="EMBL" id="CH471062">
    <property type="protein sequence ID" value="EAW61628.1"/>
    <property type="molecule type" value="Genomic_DNA"/>
</dbReference>
<dbReference type="EMBL" id="BC017366">
    <property type="protein sequence ID" value="AAH17366.1"/>
    <property type="molecule type" value="mRNA"/>
</dbReference>
<dbReference type="CCDS" id="CCDS4329.1">
    <molecule id="Q9UFF9-1"/>
</dbReference>
<dbReference type="CCDS" id="CCDS75361.1">
    <molecule id="Q9UFF9-3"/>
</dbReference>
<dbReference type="CCDS" id="CCDS78074.1">
    <molecule id="Q9UFF9-2"/>
</dbReference>
<dbReference type="PIR" id="T34529">
    <property type="entry name" value="T34529"/>
</dbReference>
<dbReference type="PIR" id="T52257">
    <property type="entry name" value="T52257"/>
</dbReference>
<dbReference type="RefSeq" id="NP_001288002.1">
    <molecule id="Q9UFF9-1"/>
    <property type="nucleotide sequence ID" value="NM_001301073.2"/>
</dbReference>
<dbReference type="RefSeq" id="NP_001288003.1">
    <molecule id="Q9UFF9-3"/>
    <property type="nucleotide sequence ID" value="NM_001301074.2"/>
</dbReference>
<dbReference type="RefSeq" id="NP_001288004.1">
    <molecule id="Q9UFF9-2"/>
    <property type="nucleotide sequence ID" value="NM_001301075.2"/>
</dbReference>
<dbReference type="RefSeq" id="NP_001288006.1">
    <molecule id="Q9UFF9-2"/>
    <property type="nucleotide sequence ID" value="NM_001301077.2"/>
</dbReference>
<dbReference type="RefSeq" id="NP_001288009.1">
    <molecule id="Q9UFF9-2"/>
    <property type="nucleotide sequence ID" value="NM_001301080.2"/>
</dbReference>
<dbReference type="RefSeq" id="NP_001288011.1">
    <molecule id="Q9UFF9-2"/>
    <property type="nucleotide sequence ID" value="NM_001301082.1"/>
</dbReference>
<dbReference type="RefSeq" id="NP_001288012.1">
    <molecule id="Q9UFF9-2"/>
    <property type="nucleotide sequence ID" value="NM_001301083.1"/>
</dbReference>
<dbReference type="RefSeq" id="NP_001288015.1">
    <property type="nucleotide sequence ID" value="NM_001301086.1"/>
</dbReference>
<dbReference type="RefSeq" id="NP_004770.4">
    <molecule id="Q9UFF9-1"/>
    <property type="nucleotide sequence ID" value="NM_004779.5"/>
</dbReference>
<dbReference type="RefSeq" id="XP_005268584.1">
    <property type="nucleotide sequence ID" value="XM_005268527.2"/>
</dbReference>
<dbReference type="RefSeq" id="XP_011536008.1">
    <property type="nucleotide sequence ID" value="XM_011537706.1"/>
</dbReference>
<dbReference type="RefSeq" id="XP_011536010.1">
    <property type="nucleotide sequence ID" value="XM_011537708.2"/>
</dbReference>
<dbReference type="RefSeq" id="XP_016865537.1">
    <property type="nucleotide sequence ID" value="XM_017010048.1"/>
</dbReference>
<dbReference type="RefSeq" id="XP_016865538.1">
    <property type="nucleotide sequence ID" value="XM_017010049.1"/>
</dbReference>
<dbReference type="RefSeq" id="XP_016865539.1">
    <molecule id="Q9UFF9-1"/>
    <property type="nucleotide sequence ID" value="XM_017010050.2"/>
</dbReference>
<dbReference type="RefSeq" id="XP_016865540.1">
    <molecule id="Q9UFF9-1"/>
    <property type="nucleotide sequence ID" value="XM_017010051.2"/>
</dbReference>
<dbReference type="RefSeq" id="XP_016865541.1">
    <property type="nucleotide sequence ID" value="XM_017010052.1"/>
</dbReference>
<dbReference type="RefSeq" id="XP_016865542.1">
    <property type="nucleotide sequence ID" value="XM_017010053.1"/>
</dbReference>
<dbReference type="RefSeq" id="XP_016865543.1">
    <molecule id="Q9UFF9-3"/>
    <property type="nucleotide sequence ID" value="XM_017010054.3"/>
</dbReference>
<dbReference type="RefSeq" id="XP_016865544.1">
    <molecule id="Q9UFF9-3"/>
    <property type="nucleotide sequence ID" value="XM_017010055.3"/>
</dbReference>
<dbReference type="RefSeq" id="XP_016865545.1">
    <molecule id="Q9UFF9-3"/>
    <property type="nucleotide sequence ID" value="XM_017010056.2"/>
</dbReference>
<dbReference type="RefSeq" id="XP_016865546.1">
    <property type="nucleotide sequence ID" value="XM_017010057.1"/>
</dbReference>
<dbReference type="RefSeq" id="XP_047273836.1">
    <molecule id="Q9UFF9-1"/>
    <property type="nucleotide sequence ID" value="XM_047417880.1"/>
</dbReference>
<dbReference type="RefSeq" id="XP_047273837.1">
    <molecule id="Q9UFF9-1"/>
    <property type="nucleotide sequence ID" value="XM_047417881.1"/>
</dbReference>
<dbReference type="RefSeq" id="XP_047273838.1">
    <molecule id="Q9UFF9-1"/>
    <property type="nucleotide sequence ID" value="XM_047417882.1"/>
</dbReference>
<dbReference type="RefSeq" id="XP_047273839.1">
    <molecule id="Q9UFF9-1"/>
    <property type="nucleotide sequence ID" value="XM_047417883.1"/>
</dbReference>
<dbReference type="RefSeq" id="XP_047273840.1">
    <molecule id="Q9UFF9-3"/>
    <property type="nucleotide sequence ID" value="XM_047417884.1"/>
</dbReference>
<dbReference type="RefSeq" id="XP_047273841.1">
    <molecule id="Q9UFF9-3"/>
    <property type="nucleotide sequence ID" value="XM_047417885.1"/>
</dbReference>
<dbReference type="RefSeq" id="XP_047273842.1">
    <molecule id="Q9UFF9-3"/>
    <property type="nucleotide sequence ID" value="XM_047417886.1"/>
</dbReference>
<dbReference type="RefSeq" id="XP_047273843.1">
    <molecule id="Q9UFF9-3"/>
    <property type="nucleotide sequence ID" value="XM_047417887.1"/>
</dbReference>
<dbReference type="RefSeq" id="XP_047273844.1">
    <molecule id="Q9UFF9-2"/>
    <property type="nucleotide sequence ID" value="XM_047417888.1"/>
</dbReference>
<dbReference type="RefSeq" id="XP_047273845.1">
    <molecule id="Q9UFF9-2"/>
    <property type="nucleotide sequence ID" value="XM_047417889.1"/>
</dbReference>
<dbReference type="RefSeq" id="XP_047273846.1">
    <molecule id="Q9UFF9-2"/>
    <property type="nucleotide sequence ID" value="XM_047417890.1"/>
</dbReference>
<dbReference type="RefSeq" id="XP_047273847.1">
    <molecule id="Q9UFF9-2"/>
    <property type="nucleotide sequence ID" value="XM_047417891.1"/>
</dbReference>
<dbReference type="RefSeq" id="XP_054209778.1">
    <molecule id="Q9UFF9-1"/>
    <property type="nucleotide sequence ID" value="XM_054353803.1"/>
</dbReference>
<dbReference type="RefSeq" id="XP_054209779.1">
    <molecule id="Q9UFF9-1"/>
    <property type="nucleotide sequence ID" value="XM_054353804.1"/>
</dbReference>
<dbReference type="RefSeq" id="XP_054209780.1">
    <molecule id="Q9UFF9-1"/>
    <property type="nucleotide sequence ID" value="XM_054353805.1"/>
</dbReference>
<dbReference type="RefSeq" id="XP_054209781.1">
    <molecule id="Q9UFF9-1"/>
    <property type="nucleotide sequence ID" value="XM_054353806.1"/>
</dbReference>
<dbReference type="RefSeq" id="XP_054209782.1">
    <molecule id="Q9UFF9-1"/>
    <property type="nucleotide sequence ID" value="XM_054353807.1"/>
</dbReference>
<dbReference type="RefSeq" id="XP_054209783.1">
    <molecule id="Q9UFF9-1"/>
    <property type="nucleotide sequence ID" value="XM_054353808.1"/>
</dbReference>
<dbReference type="RefSeq" id="XP_054209784.1">
    <molecule id="Q9UFF9-3"/>
    <property type="nucleotide sequence ID" value="XM_054353809.1"/>
</dbReference>
<dbReference type="RefSeq" id="XP_054209785.1">
    <molecule id="Q9UFF9-3"/>
    <property type="nucleotide sequence ID" value="XM_054353810.1"/>
</dbReference>
<dbReference type="RefSeq" id="XP_054209786.1">
    <molecule id="Q9UFF9-3"/>
    <property type="nucleotide sequence ID" value="XM_054353811.1"/>
</dbReference>
<dbReference type="RefSeq" id="XP_054209787.1">
    <molecule id="Q9UFF9-3"/>
    <property type="nucleotide sequence ID" value="XM_054353812.1"/>
</dbReference>
<dbReference type="RefSeq" id="XP_054209788.1">
    <molecule id="Q9UFF9-3"/>
    <property type="nucleotide sequence ID" value="XM_054353813.1"/>
</dbReference>
<dbReference type="RefSeq" id="XP_054209789.1">
    <molecule id="Q9UFF9-3"/>
    <property type="nucleotide sequence ID" value="XM_054353814.1"/>
</dbReference>
<dbReference type="RefSeq" id="XP_054209790.1">
    <molecule id="Q9UFF9-3"/>
    <property type="nucleotide sequence ID" value="XM_054353815.1"/>
</dbReference>
<dbReference type="RefSeq" id="XP_054209791.1">
    <molecule id="Q9UFF9-2"/>
    <property type="nucleotide sequence ID" value="XM_054353816.1"/>
</dbReference>
<dbReference type="RefSeq" id="XP_054209792.1">
    <molecule id="Q9UFF9-2"/>
    <property type="nucleotide sequence ID" value="XM_054353817.1"/>
</dbReference>
<dbReference type="RefSeq" id="XP_054209793.1">
    <molecule id="Q9UFF9-2"/>
    <property type="nucleotide sequence ID" value="XM_054353818.1"/>
</dbReference>
<dbReference type="RefSeq" id="XP_054209794.1">
    <molecule id="Q9UFF9-2"/>
    <property type="nucleotide sequence ID" value="XM_054353819.1"/>
</dbReference>
<dbReference type="SMR" id="Q9UFF9"/>
<dbReference type="BioGRID" id="114744">
    <property type="interactions" value="80"/>
</dbReference>
<dbReference type="ComplexPortal" id="CPX-2535">
    <property type="entry name" value="CCR4-NOT mRNA deadenylase complex, CNOT6L-CNOT8 variant"/>
</dbReference>
<dbReference type="ComplexPortal" id="CPX-2849">
    <property type="entry name" value="CCR4-NOT mRNA deadenylase complex, CNOT6-CNOT8 variant"/>
</dbReference>
<dbReference type="CORUM" id="Q9UFF9"/>
<dbReference type="DIP" id="DIP-29084N"/>
<dbReference type="FunCoup" id="Q9UFF9">
    <property type="interactions" value="3288"/>
</dbReference>
<dbReference type="IntAct" id="Q9UFF9">
    <property type="interactions" value="54"/>
</dbReference>
<dbReference type="MINT" id="Q9UFF9"/>
<dbReference type="STRING" id="9606.ENSP00000430493"/>
<dbReference type="GlyGen" id="Q9UFF9">
    <property type="glycosylation" value="1 site, 1 O-linked glycan (1 site)"/>
</dbReference>
<dbReference type="iPTMnet" id="Q9UFF9"/>
<dbReference type="PhosphoSitePlus" id="Q9UFF9"/>
<dbReference type="BioMuta" id="CNOT8"/>
<dbReference type="DMDM" id="15213949"/>
<dbReference type="jPOST" id="Q9UFF9"/>
<dbReference type="MassIVE" id="Q9UFF9"/>
<dbReference type="PaxDb" id="9606-ENSP00000430493"/>
<dbReference type="PeptideAtlas" id="Q9UFF9"/>
<dbReference type="ProteomicsDB" id="2533"/>
<dbReference type="ProteomicsDB" id="6971"/>
<dbReference type="ProteomicsDB" id="84181">
    <molecule id="Q9UFF9-1"/>
</dbReference>
<dbReference type="Pumba" id="Q9UFF9"/>
<dbReference type="Antibodypedia" id="28328">
    <property type="antibodies" value="274 antibodies from 29 providers"/>
</dbReference>
<dbReference type="DNASU" id="9337"/>
<dbReference type="Ensembl" id="ENST00000285896.11">
    <molecule id="Q9UFF9-1"/>
    <property type="protein sequence ID" value="ENSP00000285896.6"/>
    <property type="gene ID" value="ENSG00000155508.14"/>
</dbReference>
<dbReference type="Ensembl" id="ENST00000403027.6">
    <molecule id="Q9UFF9-1"/>
    <property type="protein sequence ID" value="ENSP00000384747.2"/>
    <property type="gene ID" value="ENSG00000155508.14"/>
</dbReference>
<dbReference type="Ensembl" id="ENST00000517876.5">
    <molecule id="Q9UFF9-1"/>
    <property type="protein sequence ID" value="ENSP00000430493.1"/>
    <property type="gene ID" value="ENSG00000155508.14"/>
</dbReference>
<dbReference type="Ensembl" id="ENST00000519404.5">
    <molecule id="Q9UFF9-3"/>
    <property type="protein sequence ID" value="ENSP00000430833.1"/>
    <property type="gene ID" value="ENSG00000155508.14"/>
</dbReference>
<dbReference type="Ensembl" id="ENST00000520671.5">
    <molecule id="Q9UFF9-2"/>
    <property type="protein sequence ID" value="ENSP00000428305.1"/>
    <property type="gene ID" value="ENSG00000155508.14"/>
</dbReference>
<dbReference type="Ensembl" id="ENST00000521450.5">
    <molecule id="Q9UFF9-2"/>
    <property type="protein sequence ID" value="ENSP00000431034.1"/>
    <property type="gene ID" value="ENSG00000155508.14"/>
</dbReference>
<dbReference type="Ensembl" id="ENST00000521583.5">
    <molecule id="Q9UFF9-2"/>
    <property type="protein sequence ID" value="ENSP00000429882.1"/>
    <property type="gene ID" value="ENSG00000155508.14"/>
</dbReference>
<dbReference type="Ensembl" id="ENST00000523698.5">
    <molecule id="Q9UFF9-2"/>
    <property type="protein sequence ID" value="ENSP00000428565.1"/>
    <property type="gene ID" value="ENSG00000155508.14"/>
</dbReference>
<dbReference type="GeneID" id="9337"/>
<dbReference type="KEGG" id="hsa:9337"/>
<dbReference type="MANE-Select" id="ENST00000285896.11">
    <property type="protein sequence ID" value="ENSP00000285896.6"/>
    <property type="RefSeq nucleotide sequence ID" value="NM_001301073.2"/>
    <property type="RefSeq protein sequence ID" value="NP_001288002.1"/>
</dbReference>
<dbReference type="UCSC" id="uc003lvu.4">
    <molecule id="Q9UFF9-1"/>
    <property type="organism name" value="human"/>
</dbReference>
<dbReference type="AGR" id="HGNC:9207"/>
<dbReference type="CTD" id="9337"/>
<dbReference type="DisGeNET" id="9337"/>
<dbReference type="GeneCards" id="CNOT8"/>
<dbReference type="HGNC" id="HGNC:9207">
    <property type="gene designation" value="CNOT8"/>
</dbReference>
<dbReference type="HPA" id="ENSG00000155508">
    <property type="expression patterns" value="Low tissue specificity"/>
</dbReference>
<dbReference type="MIM" id="603731">
    <property type="type" value="gene"/>
</dbReference>
<dbReference type="neXtProt" id="NX_Q9UFF9"/>
<dbReference type="OpenTargets" id="ENSG00000155508"/>
<dbReference type="PharmGKB" id="PA26679"/>
<dbReference type="VEuPathDB" id="HostDB:ENSG00000155508"/>
<dbReference type="eggNOG" id="KOG0304">
    <property type="taxonomic scope" value="Eukaryota"/>
</dbReference>
<dbReference type="GeneTree" id="ENSGT00390000000080"/>
<dbReference type="HOGENOM" id="CLU_124749_0_0_1"/>
<dbReference type="InParanoid" id="Q9UFF9"/>
<dbReference type="OMA" id="HIREVWS"/>
<dbReference type="OrthoDB" id="1164111at2759"/>
<dbReference type="PAN-GO" id="Q9UFF9">
    <property type="GO annotations" value="4 GO annotations based on evolutionary models"/>
</dbReference>
<dbReference type="PhylomeDB" id="Q9UFF9"/>
<dbReference type="TreeFam" id="TF314185"/>
<dbReference type="PathwayCommons" id="Q9UFF9"/>
<dbReference type="Reactome" id="R-HSA-429947">
    <property type="pathway name" value="Deadenylation of mRNA"/>
</dbReference>
<dbReference type="Reactome" id="R-HSA-6804115">
    <property type="pathway name" value="TP53 regulates transcription of additional cell cycle genes whose exact role in the p53 pathway remain uncertain"/>
</dbReference>
<dbReference type="Reactome" id="R-HSA-9820841">
    <property type="pathway name" value="M-decay: degradation of maternal mRNAs by maternally stored factors"/>
</dbReference>
<dbReference type="SignaLink" id="Q9UFF9"/>
<dbReference type="SIGNOR" id="Q9UFF9"/>
<dbReference type="BioGRID-ORCS" id="9337">
    <property type="hits" value="21 hits in 1162 CRISPR screens"/>
</dbReference>
<dbReference type="CD-CODE" id="232F8A39">
    <property type="entry name" value="P-body"/>
</dbReference>
<dbReference type="CD-CODE" id="DEE660B4">
    <property type="entry name" value="Stress granule"/>
</dbReference>
<dbReference type="ChiTaRS" id="CNOT8">
    <property type="organism name" value="human"/>
</dbReference>
<dbReference type="GeneWiki" id="CNOT8"/>
<dbReference type="GenomeRNAi" id="9337"/>
<dbReference type="Pharos" id="Q9UFF9">
    <property type="development level" value="Tbio"/>
</dbReference>
<dbReference type="PRO" id="PR:Q9UFF9"/>
<dbReference type="Proteomes" id="UP000005640">
    <property type="component" value="Chromosome 5"/>
</dbReference>
<dbReference type="RNAct" id="Q9UFF9">
    <property type="molecule type" value="protein"/>
</dbReference>
<dbReference type="Bgee" id="ENSG00000155508">
    <property type="expression patterns" value="Expressed in secondary oocyte and 209 other cell types or tissues"/>
</dbReference>
<dbReference type="ExpressionAtlas" id="Q9UFF9">
    <property type="expression patterns" value="baseline and differential"/>
</dbReference>
<dbReference type="GO" id="GO:0030014">
    <property type="term" value="C:CCR4-NOT complex"/>
    <property type="evidence" value="ECO:0000314"/>
    <property type="project" value="UniProtKB"/>
</dbReference>
<dbReference type="GO" id="GO:0030015">
    <property type="term" value="C:CCR4-NOT core complex"/>
    <property type="evidence" value="ECO:0000318"/>
    <property type="project" value="GO_Central"/>
</dbReference>
<dbReference type="GO" id="GO:0005829">
    <property type="term" value="C:cytosol"/>
    <property type="evidence" value="ECO:0000304"/>
    <property type="project" value="Reactome"/>
</dbReference>
<dbReference type="GO" id="GO:0005634">
    <property type="term" value="C:nucleus"/>
    <property type="evidence" value="ECO:0000314"/>
    <property type="project" value="GO_Central"/>
</dbReference>
<dbReference type="GO" id="GO:0000932">
    <property type="term" value="C:P-body"/>
    <property type="evidence" value="ECO:0000318"/>
    <property type="project" value="GO_Central"/>
</dbReference>
<dbReference type="GO" id="GO:0000175">
    <property type="term" value="F:3'-5'-RNA exonuclease activity"/>
    <property type="evidence" value="ECO:0000314"/>
    <property type="project" value="UniProtKB"/>
</dbReference>
<dbReference type="GO" id="GO:0046872">
    <property type="term" value="F:metal ion binding"/>
    <property type="evidence" value="ECO:0007669"/>
    <property type="project" value="UniProtKB-KW"/>
</dbReference>
<dbReference type="GO" id="GO:0004535">
    <property type="term" value="F:poly(A)-specific ribonuclease activity"/>
    <property type="evidence" value="ECO:0000314"/>
    <property type="project" value="UniProtKB"/>
</dbReference>
<dbReference type="GO" id="GO:0003723">
    <property type="term" value="F:RNA binding"/>
    <property type="evidence" value="ECO:0007669"/>
    <property type="project" value="UniProtKB-KW"/>
</dbReference>
<dbReference type="GO" id="GO:0035279">
    <property type="term" value="P:miRNA-mediated gene silencing by mRNA destabilization"/>
    <property type="evidence" value="ECO:0000314"/>
    <property type="project" value="UniProtKB"/>
</dbReference>
<dbReference type="GO" id="GO:0000288">
    <property type="term" value="P:nuclear-transcribed mRNA catabolic process, deadenylation-dependent decay"/>
    <property type="evidence" value="ECO:0000318"/>
    <property type="project" value="GO_Central"/>
</dbReference>
<dbReference type="GO" id="GO:0000289">
    <property type="term" value="P:nuclear-transcribed mRNA poly(A) tail shortening"/>
    <property type="evidence" value="ECO:0000303"/>
    <property type="project" value="ComplexPortal"/>
</dbReference>
<dbReference type="GO" id="GO:0008284">
    <property type="term" value="P:positive regulation of cell population proliferation"/>
    <property type="evidence" value="ECO:0000315"/>
    <property type="project" value="UniProtKB"/>
</dbReference>
<dbReference type="GO" id="GO:0061014">
    <property type="term" value="P:positive regulation of mRNA catabolic process"/>
    <property type="evidence" value="ECO:0000315"/>
    <property type="project" value="BHF-UCL"/>
</dbReference>
<dbReference type="GO" id="GO:0006417">
    <property type="term" value="P:regulation of translation"/>
    <property type="evidence" value="ECO:0007669"/>
    <property type="project" value="UniProtKB-KW"/>
</dbReference>
<dbReference type="FunFam" id="3.30.420.10:FF:000005">
    <property type="entry name" value="CCR4-NOT transcription complex subunit 7"/>
    <property type="match status" value="1"/>
</dbReference>
<dbReference type="Gene3D" id="3.30.420.10">
    <property type="entry name" value="Ribonuclease H-like superfamily/Ribonuclease H"/>
    <property type="match status" value="1"/>
</dbReference>
<dbReference type="InterPro" id="IPR039637">
    <property type="entry name" value="CNOT7/CNOT8/Pop2"/>
</dbReference>
<dbReference type="InterPro" id="IPR006941">
    <property type="entry name" value="RNase_CAF1"/>
</dbReference>
<dbReference type="InterPro" id="IPR012337">
    <property type="entry name" value="RNaseH-like_sf"/>
</dbReference>
<dbReference type="InterPro" id="IPR036397">
    <property type="entry name" value="RNaseH_sf"/>
</dbReference>
<dbReference type="PANTHER" id="PTHR10797">
    <property type="entry name" value="CCR4-NOT TRANSCRIPTION COMPLEX SUBUNIT"/>
    <property type="match status" value="1"/>
</dbReference>
<dbReference type="Pfam" id="PF04857">
    <property type="entry name" value="CAF1"/>
    <property type="match status" value="2"/>
</dbReference>
<dbReference type="SUPFAM" id="SSF53098">
    <property type="entry name" value="Ribonuclease H-like"/>
    <property type="match status" value="1"/>
</dbReference>
<sequence length="292" mass="33540">MPAALVENSQVICEVWASNLEEEMRKIREIVLSYSYIAMDTEFPGVVVRPIGEFRSSIDYQYQLLRCNVDLLKIIQLGLTFTNEKGEYPSGINTWQFNFKFNLTEDMYSQDSIDLLANSGLQFQKHEEEGIDTLHFAELLMTSGVVLCDNVKWLSFHSGYDFGYMVKLLTDSRLPEEEHEFFHILNLFFPSIYDVKYLMKSCKNLKGGLQEVADQLDLQRIGRQHQAGSDSLLTGMAFFRMKELFFEDSIDDAKYCGRLYGLGTGVAQKQNEDVDSAQEKMSILAIINNMQQ</sequence>
<proteinExistence type="evidence at protein level"/>
<gene>
    <name type="primary">CNOT8</name>
    <name type="synonym">CALIF</name>
    <name type="synonym">POP2</name>
</gene>
<reference key="1">
    <citation type="journal article" date="1999" name="Genomics">
        <title>The human POP2 gene: identification, sequencing, and mapping to the critical region of the 5q- syndrome.</title>
        <authorList>
            <person name="Fidler C."/>
            <person name="Wainscoat J.S."/>
            <person name="Boultwood J."/>
        </authorList>
    </citation>
    <scope>NUCLEOTIDE SEQUENCE [MRNA] (ISOFORM 1)</scope>
    <scope>VARIANT PRO-32</scope>
</reference>
<reference key="2">
    <citation type="journal article" date="2000" name="Nucleic Acids Res.">
        <title>Isolation and characterization of human orthologs of yeast CCR4-NOT complex subunits.</title>
        <authorList>
            <person name="Albert T.K."/>
            <person name="Lemaire M."/>
            <person name="van Berkum N.L."/>
            <person name="Gentz R."/>
            <person name="Collart M.A."/>
            <person name="Timmers H.T.M."/>
        </authorList>
    </citation>
    <scope>NUCLEOTIDE SEQUENCE [MRNA] (ISOFORM 1)</scope>
    <scope>INTERACTION WITH CNOT1 AND CNOT3</scope>
</reference>
<reference key="3">
    <citation type="submission" date="2003-07" db="EMBL/GenBank/DDBJ databases">
        <title>Cloning and characterization of a new human cDNA homologous to murine mCAF1 mRNA.</title>
        <authorList>
            <person name="Jiang C.L."/>
            <person name="Yu L."/>
            <person name="Ding J.B."/>
            <person name="Ge H.P."/>
            <person name="He H."/>
            <person name="Zhao S.Y."/>
        </authorList>
    </citation>
    <scope>NUCLEOTIDE SEQUENCE [MRNA] (ISOFORM 1)</scope>
</reference>
<reference key="4">
    <citation type="journal article" date="2001" name="Genome Res.">
        <title>Towards a catalog of human genes and proteins: sequencing and analysis of 500 novel complete protein coding human cDNAs.</title>
        <authorList>
            <person name="Wiemann S."/>
            <person name="Weil B."/>
            <person name="Wellenreuther R."/>
            <person name="Gassenhuber J."/>
            <person name="Glassl S."/>
            <person name="Ansorge W."/>
            <person name="Boecher M."/>
            <person name="Bloecker H."/>
            <person name="Bauersachs S."/>
            <person name="Blum H."/>
            <person name="Lauber J."/>
            <person name="Duesterhoeft A."/>
            <person name="Beyer A."/>
            <person name="Koehrer K."/>
            <person name="Strack N."/>
            <person name="Mewes H.-W."/>
            <person name="Ottenwaelder B."/>
            <person name="Obermaier B."/>
            <person name="Tampe J."/>
            <person name="Heubner D."/>
            <person name="Wambutt R."/>
            <person name="Korn B."/>
            <person name="Klein M."/>
            <person name="Poustka A."/>
        </authorList>
    </citation>
    <scope>NUCLEOTIDE SEQUENCE [LARGE SCALE MRNA] (ISOFORM 1)</scope>
    <source>
        <tissue>Testis</tissue>
    </source>
</reference>
<reference key="5">
    <citation type="submission" date="2003-05" db="EMBL/GenBank/DDBJ databases">
        <title>Cloning of human full-length CDSs in BD Creator(TM) system donor vector.</title>
        <authorList>
            <person name="Kalnine N."/>
            <person name="Chen X."/>
            <person name="Rolfs A."/>
            <person name="Halleck A."/>
            <person name="Hines L."/>
            <person name="Eisenstein S."/>
            <person name="Koundinya M."/>
            <person name="Raphael J."/>
            <person name="Moreira D."/>
            <person name="Kelley T."/>
            <person name="LaBaer J."/>
            <person name="Lin Y."/>
            <person name="Phelan M."/>
            <person name="Farmer A."/>
        </authorList>
    </citation>
    <scope>NUCLEOTIDE SEQUENCE [LARGE SCALE MRNA] (ISOFORM 1)</scope>
</reference>
<reference key="6">
    <citation type="journal article" date="2004" name="Nat. Genet.">
        <title>Complete sequencing and characterization of 21,243 full-length human cDNAs.</title>
        <authorList>
            <person name="Ota T."/>
            <person name="Suzuki Y."/>
            <person name="Nishikawa T."/>
            <person name="Otsuki T."/>
            <person name="Sugiyama T."/>
            <person name="Irie R."/>
            <person name="Wakamatsu A."/>
            <person name="Hayashi K."/>
            <person name="Sato H."/>
            <person name="Nagai K."/>
            <person name="Kimura K."/>
            <person name="Makita H."/>
            <person name="Sekine M."/>
            <person name="Obayashi M."/>
            <person name="Nishi T."/>
            <person name="Shibahara T."/>
            <person name="Tanaka T."/>
            <person name="Ishii S."/>
            <person name="Yamamoto J."/>
            <person name="Saito K."/>
            <person name="Kawai Y."/>
            <person name="Isono Y."/>
            <person name="Nakamura Y."/>
            <person name="Nagahari K."/>
            <person name="Murakami K."/>
            <person name="Yasuda T."/>
            <person name="Iwayanagi T."/>
            <person name="Wagatsuma M."/>
            <person name="Shiratori A."/>
            <person name="Sudo H."/>
            <person name="Hosoiri T."/>
            <person name="Kaku Y."/>
            <person name="Kodaira H."/>
            <person name="Kondo H."/>
            <person name="Sugawara M."/>
            <person name="Takahashi M."/>
            <person name="Kanda K."/>
            <person name="Yokoi T."/>
            <person name="Furuya T."/>
            <person name="Kikkawa E."/>
            <person name="Omura Y."/>
            <person name="Abe K."/>
            <person name="Kamihara K."/>
            <person name="Katsuta N."/>
            <person name="Sato K."/>
            <person name="Tanikawa M."/>
            <person name="Yamazaki M."/>
            <person name="Ninomiya K."/>
            <person name="Ishibashi T."/>
            <person name="Yamashita H."/>
            <person name="Murakawa K."/>
            <person name="Fujimori K."/>
            <person name="Tanai H."/>
            <person name="Kimata M."/>
            <person name="Watanabe M."/>
            <person name="Hiraoka S."/>
            <person name="Chiba Y."/>
            <person name="Ishida S."/>
            <person name="Ono Y."/>
            <person name="Takiguchi S."/>
            <person name="Watanabe S."/>
            <person name="Yosida M."/>
            <person name="Hotuta T."/>
            <person name="Kusano J."/>
            <person name="Kanehori K."/>
            <person name="Takahashi-Fujii A."/>
            <person name="Hara H."/>
            <person name="Tanase T.-O."/>
            <person name="Nomura Y."/>
            <person name="Togiya S."/>
            <person name="Komai F."/>
            <person name="Hara R."/>
            <person name="Takeuchi K."/>
            <person name="Arita M."/>
            <person name="Imose N."/>
            <person name="Musashino K."/>
            <person name="Yuuki H."/>
            <person name="Oshima A."/>
            <person name="Sasaki N."/>
            <person name="Aotsuka S."/>
            <person name="Yoshikawa Y."/>
            <person name="Matsunawa H."/>
            <person name="Ichihara T."/>
            <person name="Shiohata N."/>
            <person name="Sano S."/>
            <person name="Moriya S."/>
            <person name="Momiyama H."/>
            <person name="Satoh N."/>
            <person name="Takami S."/>
            <person name="Terashima Y."/>
            <person name="Suzuki O."/>
            <person name="Nakagawa S."/>
            <person name="Senoh A."/>
            <person name="Mizoguchi H."/>
            <person name="Goto Y."/>
            <person name="Shimizu F."/>
            <person name="Wakebe H."/>
            <person name="Hishigaki H."/>
            <person name="Watanabe T."/>
            <person name="Sugiyama A."/>
            <person name="Takemoto M."/>
            <person name="Kawakami B."/>
            <person name="Yamazaki M."/>
            <person name="Watanabe K."/>
            <person name="Kumagai A."/>
            <person name="Itakura S."/>
            <person name="Fukuzumi Y."/>
            <person name="Fujimori Y."/>
            <person name="Komiyama M."/>
            <person name="Tashiro H."/>
            <person name="Tanigami A."/>
            <person name="Fujiwara T."/>
            <person name="Ono T."/>
            <person name="Yamada K."/>
            <person name="Fujii Y."/>
            <person name="Ozaki K."/>
            <person name="Hirao M."/>
            <person name="Ohmori Y."/>
            <person name="Kawabata A."/>
            <person name="Hikiji T."/>
            <person name="Kobatake N."/>
            <person name="Inagaki H."/>
            <person name="Ikema Y."/>
            <person name="Okamoto S."/>
            <person name="Okitani R."/>
            <person name="Kawakami T."/>
            <person name="Noguchi S."/>
            <person name="Itoh T."/>
            <person name="Shigeta K."/>
            <person name="Senba T."/>
            <person name="Matsumura K."/>
            <person name="Nakajima Y."/>
            <person name="Mizuno T."/>
            <person name="Morinaga M."/>
            <person name="Sasaki M."/>
            <person name="Togashi T."/>
            <person name="Oyama M."/>
            <person name="Hata H."/>
            <person name="Watanabe M."/>
            <person name="Komatsu T."/>
            <person name="Mizushima-Sugano J."/>
            <person name="Satoh T."/>
            <person name="Shirai Y."/>
            <person name="Takahashi Y."/>
            <person name="Nakagawa K."/>
            <person name="Okumura K."/>
            <person name="Nagase T."/>
            <person name="Nomura N."/>
            <person name="Kikuchi H."/>
            <person name="Masuho Y."/>
            <person name="Yamashita R."/>
            <person name="Nakai K."/>
            <person name="Yada T."/>
            <person name="Nakamura Y."/>
            <person name="Ohara O."/>
            <person name="Isogai T."/>
            <person name="Sugano S."/>
        </authorList>
    </citation>
    <scope>NUCLEOTIDE SEQUENCE [LARGE SCALE MRNA] (ISOFORMS 1; 2 AND 3)</scope>
    <source>
        <tissue>Brain</tissue>
        <tissue>Colon</tissue>
        <tissue>Liver</tissue>
        <tissue>Tongue</tissue>
    </source>
</reference>
<reference key="7">
    <citation type="journal article" date="2004" name="Nature">
        <title>The DNA sequence and comparative analysis of human chromosome 5.</title>
        <authorList>
            <person name="Schmutz J."/>
            <person name="Martin J."/>
            <person name="Terry A."/>
            <person name="Couronne O."/>
            <person name="Grimwood J."/>
            <person name="Lowry S."/>
            <person name="Gordon L.A."/>
            <person name="Scott D."/>
            <person name="Xie G."/>
            <person name="Huang W."/>
            <person name="Hellsten U."/>
            <person name="Tran-Gyamfi M."/>
            <person name="She X."/>
            <person name="Prabhakar S."/>
            <person name="Aerts A."/>
            <person name="Altherr M."/>
            <person name="Bajorek E."/>
            <person name="Black S."/>
            <person name="Branscomb E."/>
            <person name="Caoile C."/>
            <person name="Challacombe J.F."/>
            <person name="Chan Y.M."/>
            <person name="Denys M."/>
            <person name="Detter J.C."/>
            <person name="Escobar J."/>
            <person name="Flowers D."/>
            <person name="Fotopulos D."/>
            <person name="Glavina T."/>
            <person name="Gomez M."/>
            <person name="Gonzales E."/>
            <person name="Goodstein D."/>
            <person name="Grigoriev I."/>
            <person name="Groza M."/>
            <person name="Hammon N."/>
            <person name="Hawkins T."/>
            <person name="Haydu L."/>
            <person name="Israni S."/>
            <person name="Jett J."/>
            <person name="Kadner K."/>
            <person name="Kimball H."/>
            <person name="Kobayashi A."/>
            <person name="Lopez F."/>
            <person name="Lou Y."/>
            <person name="Martinez D."/>
            <person name="Medina C."/>
            <person name="Morgan J."/>
            <person name="Nandkeshwar R."/>
            <person name="Noonan J.P."/>
            <person name="Pitluck S."/>
            <person name="Pollard M."/>
            <person name="Predki P."/>
            <person name="Priest J."/>
            <person name="Ramirez L."/>
            <person name="Retterer J."/>
            <person name="Rodriguez A."/>
            <person name="Rogers S."/>
            <person name="Salamov A."/>
            <person name="Salazar A."/>
            <person name="Thayer N."/>
            <person name="Tice H."/>
            <person name="Tsai M."/>
            <person name="Ustaszewska A."/>
            <person name="Vo N."/>
            <person name="Wheeler J."/>
            <person name="Wu K."/>
            <person name="Yang J."/>
            <person name="Dickson M."/>
            <person name="Cheng J.-F."/>
            <person name="Eichler E.E."/>
            <person name="Olsen A."/>
            <person name="Pennacchio L.A."/>
            <person name="Rokhsar D.S."/>
            <person name="Richardson P."/>
            <person name="Lucas S.M."/>
            <person name="Myers R.M."/>
            <person name="Rubin E.M."/>
        </authorList>
    </citation>
    <scope>NUCLEOTIDE SEQUENCE [LARGE SCALE GENOMIC DNA]</scope>
</reference>
<reference key="8">
    <citation type="submission" date="2005-09" db="EMBL/GenBank/DDBJ databases">
        <authorList>
            <person name="Mural R.J."/>
            <person name="Istrail S."/>
            <person name="Sutton G.G."/>
            <person name="Florea L."/>
            <person name="Halpern A.L."/>
            <person name="Mobarry C.M."/>
            <person name="Lippert R."/>
            <person name="Walenz B."/>
            <person name="Shatkay H."/>
            <person name="Dew I."/>
            <person name="Miller J.R."/>
            <person name="Flanigan M.J."/>
            <person name="Edwards N.J."/>
            <person name="Bolanos R."/>
            <person name="Fasulo D."/>
            <person name="Halldorsson B.V."/>
            <person name="Hannenhalli S."/>
            <person name="Turner R."/>
            <person name="Yooseph S."/>
            <person name="Lu F."/>
            <person name="Nusskern D.R."/>
            <person name="Shue B.C."/>
            <person name="Zheng X.H."/>
            <person name="Zhong F."/>
            <person name="Delcher A.L."/>
            <person name="Huson D.H."/>
            <person name="Kravitz S.A."/>
            <person name="Mouchard L."/>
            <person name="Reinert K."/>
            <person name="Remington K.A."/>
            <person name="Clark A.G."/>
            <person name="Waterman M.S."/>
            <person name="Eichler E.E."/>
            <person name="Adams M.D."/>
            <person name="Hunkapiller M.W."/>
            <person name="Myers E.W."/>
            <person name="Venter J.C."/>
        </authorList>
    </citation>
    <scope>NUCLEOTIDE SEQUENCE [LARGE SCALE GENOMIC DNA]</scope>
</reference>
<reference key="9">
    <citation type="journal article" date="2004" name="Genome Res.">
        <title>The status, quality, and expansion of the NIH full-length cDNA project: the Mammalian Gene Collection (MGC).</title>
        <authorList>
            <consortium name="The MGC Project Team"/>
        </authorList>
    </citation>
    <scope>NUCLEOTIDE SEQUENCE [LARGE SCALE MRNA] (ISOFORM 1)</scope>
    <source>
        <tissue>Kidney</tissue>
    </source>
</reference>
<reference key="10">
    <citation type="journal article" date="2001" name="J. Biol. Chem.">
        <title>Relationships of the antiproliferative proteins BTG1 and BTG2 with CAF1, the human homolog of a component of the yeast CCR4 transcriptional complex: involvement in estrogen receptor alpha signaling pathway.</title>
        <authorList>
            <person name="Prevot D."/>
            <person name="Morel A.P."/>
            <person name="Voeltzel T."/>
            <person name="Rostan M.C."/>
            <person name="Rimokh R."/>
            <person name="Magaud J.P."/>
            <person name="Corbo L."/>
        </authorList>
    </citation>
    <scope>INTERACTION WITH BTG1 AND BTG2</scope>
</reference>
<reference key="11">
    <citation type="journal article" date="2003" name="J. Cell Sci.">
        <title>BTG2 antiproliferative protein interacts with the human CCR4 complex existing in vivo in three cell-cycle-regulated forms.</title>
        <authorList>
            <person name="Morel A.-P."/>
            <person name="Sentis S."/>
            <person name="Bianchin C."/>
            <person name="Le Romancer M."/>
            <person name="Jonard L."/>
            <person name="Rostan M.-C."/>
            <person name="Rimokh R."/>
            <person name="Corbo L."/>
        </authorList>
    </citation>
    <scope>FUNCTION</scope>
    <scope>SUBCELLULAR LOCATION</scope>
    <scope>INTERACTION WITH BTG2</scope>
</reference>
<reference key="12">
    <citation type="journal article" date="2005" name="RNA">
        <title>Conservation of the deadenylase activity of proteins of the Caf1 family in human.</title>
        <authorList>
            <person name="Bianchin C."/>
            <person name="Mauxion F."/>
            <person name="Sentis S."/>
            <person name="Seraphin B."/>
            <person name="Corbo L."/>
        </authorList>
    </citation>
    <scope>CATALYTIC ACTIVITY</scope>
</reference>
<reference key="13">
    <citation type="journal article" date="2009" name="Biochem. J.">
        <title>Human Ccr4-Not complexes contain variable deadenylase subunits.</title>
        <authorList>
            <person name="Lau N.C."/>
            <person name="Kolkman A."/>
            <person name="van Schaik F.M."/>
            <person name="Mulder K.W."/>
            <person name="Pijnappel W.W."/>
            <person name="Heck A.J."/>
            <person name="Timmers H.T."/>
        </authorList>
    </citation>
    <scope>IDENTIFICATION IN THE CCR4-NOT COMPLEX</scope>
    <scope>COMPOSITION OF THE CCR4-NOT COMPLEX</scope>
</reference>
<reference key="14">
    <citation type="journal article" date="2009" name="Mol. Biol. Cell">
        <title>The Ccr4-NOT deadenylase subunits CNOT7 and CNOT8 have overlapping roles and modulate cell proliferation.</title>
        <authorList>
            <person name="Aslam A."/>
            <person name="Mittal S."/>
            <person name="Koch F."/>
            <person name="Andrau J.C."/>
            <person name="Winkler G.S."/>
        </authorList>
    </citation>
    <scope>FUNCTION</scope>
</reference>
<reference key="15">
    <citation type="journal article" date="2010" name="Mol. Cell. Biol.">
        <title>CCR4-NOT deadenylates mRNA associated with complexes in human cells.</title>
        <authorList>
            <person name="Piao X."/>
            <person name="Zhang X."/>
            <person name="Wu L."/>
            <person name="Belasco J.G."/>
        </authorList>
    </citation>
    <scope>FUNCTION</scope>
    <scope>MUTAGENESIS OF ASP-40 AND GLU-42</scope>
</reference>
<reference key="16">
    <citation type="journal article" date="2011" name="BMC Syst. Biol.">
        <title>Initial characterization of the human central proteome.</title>
        <authorList>
            <person name="Burkard T.R."/>
            <person name="Planyavsky M."/>
            <person name="Kaupe I."/>
            <person name="Breitwieser F.P."/>
            <person name="Buerckstuemmer T."/>
            <person name="Bennett K.L."/>
            <person name="Superti-Furga G."/>
            <person name="Colinge J."/>
        </authorList>
    </citation>
    <scope>IDENTIFICATION BY MASS SPECTROMETRY [LARGE SCALE ANALYSIS]</scope>
</reference>
<reference key="17">
    <citation type="journal article" date="2012" name="PLoS ONE">
        <title>The anti-proliferative activity of BTG/TOB proteins is mediated via the Caf1a (CNOT7) and Caf1b (CNOT8) deadenylase subunits of the Ccr4-not complex.</title>
        <authorList>
            <person name="Doidge R."/>
            <person name="Mittal S."/>
            <person name="Aslam A."/>
            <person name="Winkler G.S."/>
        </authorList>
    </citation>
    <scope>FUNCTION</scope>
    <scope>INTERACTION WITH TOB1 AND BTG2</scope>
</reference>